<name>JZT4A_CHIGU</name>
<feature type="signal peptide" evidence="3">
    <location>
        <begin position="1"/>
        <end position="21"/>
    </location>
</feature>
<feature type="propeptide" id="PRO_0000398394" evidence="1">
    <location>
        <begin position="22"/>
        <end position="29"/>
    </location>
</feature>
<feature type="peptide" id="PRO_0000398395" description="Kappa-theraphotoxin-Cg3a 1">
    <location>
        <begin position="30"/>
        <end position="63"/>
    </location>
</feature>
<feature type="disulfide bond" evidence="2">
    <location>
        <begin position="31"/>
        <end position="46"/>
    </location>
</feature>
<feature type="disulfide bond" evidence="2">
    <location>
        <begin position="38"/>
        <end position="51"/>
    </location>
</feature>
<feature type="disulfide bond" evidence="2">
    <location>
        <begin position="45"/>
        <end position="58"/>
    </location>
</feature>
<organism>
    <name type="scientific">Chilobrachys guangxiensis</name>
    <name type="common">Chinese earth tiger tarantula</name>
    <name type="synonym">Chilobrachys jingzhao</name>
    <dbReference type="NCBI Taxonomy" id="278060"/>
    <lineage>
        <taxon>Eukaryota</taxon>
        <taxon>Metazoa</taxon>
        <taxon>Ecdysozoa</taxon>
        <taxon>Arthropoda</taxon>
        <taxon>Chelicerata</taxon>
        <taxon>Arachnida</taxon>
        <taxon>Araneae</taxon>
        <taxon>Mygalomorphae</taxon>
        <taxon>Theraphosidae</taxon>
        <taxon>Chilobrachys</taxon>
    </lineage>
</organism>
<accession>B1P1D5</accession>
<keyword id="KW-1015">Disulfide bond</keyword>
<keyword id="KW-0872">Ion channel impairing toxin</keyword>
<keyword id="KW-0960">Knottin</keyword>
<keyword id="KW-0632">Potassium channel impairing toxin</keyword>
<keyword id="KW-0964">Secreted</keyword>
<keyword id="KW-0732">Signal</keyword>
<keyword id="KW-0800">Toxin</keyword>
<keyword id="KW-1220">Voltage-gated potassium channel impairing toxin</keyword>
<reference key="1">
    <citation type="journal article" date="2008" name="Cell. Mol. Life Sci.">
        <title>Molecular diversity and evolution of cystine knot toxins of the tarantula Chilobrachys jingzhao.</title>
        <authorList>
            <person name="Chen J."/>
            <person name="Deng M."/>
            <person name="He Q."/>
            <person name="Meng E."/>
            <person name="Jiang L."/>
            <person name="Liao Z."/>
            <person name="Rong M."/>
            <person name="Liang S."/>
        </authorList>
    </citation>
    <scope>NUCLEOTIDE SEQUENCE [LARGE SCALE MRNA]</scope>
    <source>
        <tissue>Venom gland</tissue>
    </source>
</reference>
<dbReference type="EMBL" id="EU233866">
    <property type="protein sequence ID" value="ABY71685.1"/>
    <property type="molecule type" value="mRNA"/>
</dbReference>
<dbReference type="BMRB" id="B1P1D5"/>
<dbReference type="SMR" id="B1P1D5"/>
<dbReference type="ArachnoServer" id="AS000814">
    <property type="toxin name" value="kappa-theraphotoxin-Cg3a"/>
</dbReference>
<dbReference type="GO" id="GO:0005576">
    <property type="term" value="C:extracellular region"/>
    <property type="evidence" value="ECO:0007669"/>
    <property type="project" value="UniProtKB-SubCell"/>
</dbReference>
<dbReference type="GO" id="GO:0008200">
    <property type="term" value="F:ion channel inhibitor activity"/>
    <property type="evidence" value="ECO:0007669"/>
    <property type="project" value="InterPro"/>
</dbReference>
<dbReference type="GO" id="GO:0015459">
    <property type="term" value="F:potassium channel regulator activity"/>
    <property type="evidence" value="ECO:0007669"/>
    <property type="project" value="UniProtKB-KW"/>
</dbReference>
<dbReference type="GO" id="GO:0090729">
    <property type="term" value="F:toxin activity"/>
    <property type="evidence" value="ECO:0007669"/>
    <property type="project" value="UniProtKB-KW"/>
</dbReference>
<dbReference type="InterPro" id="IPR011696">
    <property type="entry name" value="Huwentoxin-1"/>
</dbReference>
<dbReference type="Pfam" id="PF07740">
    <property type="entry name" value="Toxin_12"/>
    <property type="match status" value="1"/>
</dbReference>
<dbReference type="SUPFAM" id="SSF57059">
    <property type="entry name" value="omega toxin-like"/>
    <property type="match status" value="1"/>
</dbReference>
<sequence length="63" mass="6842">MKNTSILFILGLALLLVLAFEVQVGESDGECGGFWWKCGSGKPACCPKYVCSPKWGLCNFPMP</sequence>
<comment type="function">
    <text evidence="1">Gating modifier of Kv2.1/KCNB1, Kv2.2/KCNB2 and Kv4.3/KCND3 channels.</text>
</comment>
<comment type="subcellular location">
    <subcellularLocation>
        <location evidence="1">Secreted</location>
    </subcellularLocation>
</comment>
<comment type="tissue specificity">
    <text>Expressed by the venom gland.</text>
</comment>
<comment type="domain">
    <text evidence="1">The presence of a 'disulfide through disulfide knot' structurally defines this protein as a knottin.</text>
</comment>
<comment type="similarity">
    <text evidence="4">Belongs to the neurotoxin 10 (Hwtx-1) family. 44 (Jztx-4) subfamily.</text>
</comment>
<evidence type="ECO:0000250" key="1"/>
<evidence type="ECO:0000250" key="2">
    <source>
        <dbReference type="UniProtKB" id="P62520"/>
    </source>
</evidence>
<evidence type="ECO:0000255" key="3"/>
<evidence type="ECO:0000305" key="4"/>
<proteinExistence type="evidence at transcript level"/>
<protein>
    <recommendedName>
        <fullName>Kappa-theraphotoxin-Cg3a 1</fullName>
        <shortName>Kappa-TRTX-Cg3a</shortName>
    </recommendedName>
    <alternativeName>
        <fullName>Jingzhaotoxin-4</fullName>
        <shortName>JZTX-4</shortName>
    </alternativeName>
</protein>